<gene>
    <name type="primary">spt6</name>
    <name type="ORF">AFUA_3G05890</name>
</gene>
<evidence type="ECO:0000250" key="1">
    <source>
        <dbReference type="UniProtKB" id="P23615"/>
    </source>
</evidence>
<evidence type="ECO:0000255" key="2">
    <source>
        <dbReference type="PROSITE-ProRule" id="PRU00191"/>
    </source>
</evidence>
<evidence type="ECO:0000256" key="3">
    <source>
        <dbReference type="SAM" id="MobiDB-lite"/>
    </source>
</evidence>
<evidence type="ECO:0000305" key="4"/>
<sequence>MSARDFVEGEAVLDDEENENEEEQEEDYDGEVHEGAGTMNHYNDSSEEEEEDDDDEEAARAIREGFIVDEDEEIEERAERRREKRKRRREEREREDEHLDEEDLELIGELNPAFQSAAATESKFKRLKRGHKDHRQASQGIDDIFNSDEDEEAAGDYGRPSHRRPMHDEMKDFIEEDVFTDDELEREREDLEIARPAKRGVTGLGATDAAGLDENALEDMRAAFGDGNEYLFALEMEEQEEEQEEDQEKHLDLKDVFEPSQLAERMLTEEDNQIRLLDEPERHQLARKPYRNLVLTEEQFREEAAWIANLMLLKKRIEPELREPFQRSVAKVLEFLVTDDWEVPFIFQHRKDYMIHATKVPVAGAPADGDTSQYTIKAEKLLNMTDLWDIFDHDLKFRALVEKRNTIQKTYDNLQSLFNVNDSVVQDMLSTAVTMEELQDVQDYVHFQYASQLRDINLMNGEANGDTHRRKATGRSFFERVRNGKAYGLVRAFGITADAFAQNALKEGRRQYTEDPAERPEEMADSFIDNDFSNASHVLKAAKALFAEEIVMSPKMRKVIRQAYYMNGAVDCFRTEKGLRRIDEQHPYYEFKYLRNQQLSDIARQPELYLRMLKAEEEGLVEVKVRFENFDHFRQRLYPDIESDNYSEIADAWNRTRREVLDMALGKLERLINRSVKENIRQECENHVAKECREAFSQRLDQAPYKPKGMVLGTVPRVLAMSTGTGIVGRDPIHWAYVEEDGRVLENGKFVDLSIGDRDRSIPDGKDVEALIELLERRRPDVIGVSGMSPETRKLYKLLTELVEKKDLRGATYTDERDEEISDPLEVVIVNDEVARLYQHSERAKKDHPSFGPLTHYCVALAKYLQSPLKEYASLGRDIVSIQFKRGQQLVAQELLLKQLETALVDMVNLVGVDINEAVTDPATANLLPYVCGLGPRKAAHLLKIVNMNGGVVNNRVELLGVNAQYPAMGVKVWNNCASFLFIDFENADPDADPLDNTRVHPEDYDIARKMAADALELDEEDIKAETDENGPGAIVRKLFRDEAQDRVNDLILEEYAEQLEKNLNQRKRATLETIRAELQQPYEELRKQFALLSTDDVFTMLTGETSDTLAEGMVVPISIKRITDDHIDGKLDCGVDVLVPESELTDRYDIPVRALYSLHQTLPAKVLFLNKKNFLCNVSLREEQVSRPTPRPRDHMRGEWDDRQEAKDREMLQEKTQSGGRVMRVIKHPLFRPFNSTQAEEFLGSQSRGDVVIRPSSKGPDHLAVTWKVADGIFQHIDVLELDKENEFSVGRTLKVGGRYTYSDLDDLIFNHVKAMAKKVDEMMLHEKYQEGSKDATYSWLNTYTKANPRRSAYAFCIDPKHPGYFQLCFKAGENAQLHSWPVKVIPQGYELQRNPYPDMRALCNGFKLLFTNMQAGKR</sequence>
<accession>Q4WWH6</accession>
<organism>
    <name type="scientific">Aspergillus fumigatus (strain ATCC MYA-4609 / CBS 101355 / FGSC A1100 / Af293)</name>
    <name type="common">Neosartorya fumigata</name>
    <dbReference type="NCBI Taxonomy" id="330879"/>
    <lineage>
        <taxon>Eukaryota</taxon>
        <taxon>Fungi</taxon>
        <taxon>Dikarya</taxon>
        <taxon>Ascomycota</taxon>
        <taxon>Pezizomycotina</taxon>
        <taxon>Eurotiomycetes</taxon>
        <taxon>Eurotiomycetidae</taxon>
        <taxon>Eurotiales</taxon>
        <taxon>Aspergillaceae</taxon>
        <taxon>Aspergillus</taxon>
        <taxon>Aspergillus subgen. Fumigati</taxon>
    </lineage>
</organism>
<feature type="chain" id="PRO_0000238569" description="Transcription elongation factor spt6">
    <location>
        <begin position="1"/>
        <end position="1420"/>
    </location>
</feature>
<feature type="domain" description="SH2" evidence="2">
    <location>
        <begin position="1230"/>
        <end position="1330"/>
    </location>
</feature>
<feature type="region of interest" description="Disordered" evidence="3">
    <location>
        <begin position="1"/>
        <end position="104"/>
    </location>
</feature>
<feature type="region of interest" description="Disordered" evidence="3">
    <location>
        <begin position="117"/>
        <end position="167"/>
    </location>
</feature>
<feature type="region of interest" description="Disordered" evidence="3">
    <location>
        <begin position="1186"/>
        <end position="1208"/>
    </location>
</feature>
<feature type="compositionally biased region" description="Acidic residues" evidence="3">
    <location>
        <begin position="11"/>
        <end position="29"/>
    </location>
</feature>
<feature type="compositionally biased region" description="Acidic residues" evidence="3">
    <location>
        <begin position="45"/>
        <end position="57"/>
    </location>
</feature>
<feature type="compositionally biased region" description="Acidic residues" evidence="3">
    <location>
        <begin position="67"/>
        <end position="76"/>
    </location>
</feature>
<feature type="compositionally biased region" description="Basic residues" evidence="3">
    <location>
        <begin position="125"/>
        <end position="134"/>
    </location>
</feature>
<feature type="compositionally biased region" description="Acidic residues" evidence="3">
    <location>
        <begin position="145"/>
        <end position="154"/>
    </location>
</feature>
<protein>
    <recommendedName>
        <fullName>Transcription elongation factor spt6</fullName>
    </recommendedName>
    <alternativeName>
        <fullName>Chromatin elongation factor spt6</fullName>
    </alternativeName>
</protein>
<name>SPT6_ASPFU</name>
<proteinExistence type="inferred from homology"/>
<dbReference type="EMBL" id="AAHF01000002">
    <property type="protein sequence ID" value="EAL92977.1"/>
    <property type="molecule type" value="Genomic_DNA"/>
</dbReference>
<dbReference type="RefSeq" id="XP_755015.1">
    <property type="nucleotide sequence ID" value="XM_749922.1"/>
</dbReference>
<dbReference type="SMR" id="Q4WWH6"/>
<dbReference type="FunCoup" id="Q4WWH6">
    <property type="interactions" value="1208"/>
</dbReference>
<dbReference type="STRING" id="330879.Q4WWH6"/>
<dbReference type="EnsemblFungi" id="EAL92977">
    <property type="protein sequence ID" value="EAL92977"/>
    <property type="gene ID" value="AFUA_3G05890"/>
</dbReference>
<dbReference type="GeneID" id="3512651"/>
<dbReference type="KEGG" id="afm:AFUA_3G05890"/>
<dbReference type="VEuPathDB" id="FungiDB:Afu3g05890"/>
<dbReference type="eggNOG" id="KOG1856">
    <property type="taxonomic scope" value="Eukaryota"/>
</dbReference>
<dbReference type="HOGENOM" id="CLU_001680_0_1_1"/>
<dbReference type="InParanoid" id="Q4WWH6"/>
<dbReference type="OMA" id="GYFYLCF"/>
<dbReference type="OrthoDB" id="995477at2759"/>
<dbReference type="Proteomes" id="UP000002530">
    <property type="component" value="Chromosome 3"/>
</dbReference>
<dbReference type="GO" id="GO:0000791">
    <property type="term" value="C:euchromatin"/>
    <property type="evidence" value="ECO:0007669"/>
    <property type="project" value="EnsemblFungi"/>
</dbReference>
<dbReference type="GO" id="GO:0005721">
    <property type="term" value="C:pericentric heterochromatin"/>
    <property type="evidence" value="ECO:0007669"/>
    <property type="project" value="EnsemblFungi"/>
</dbReference>
<dbReference type="GO" id="GO:0008023">
    <property type="term" value="C:transcription elongation factor complex"/>
    <property type="evidence" value="ECO:0000318"/>
    <property type="project" value="GO_Central"/>
</dbReference>
<dbReference type="GO" id="GO:0003677">
    <property type="term" value="F:DNA binding"/>
    <property type="evidence" value="ECO:0007669"/>
    <property type="project" value="InterPro"/>
</dbReference>
<dbReference type="GO" id="GO:0042393">
    <property type="term" value="F:histone binding"/>
    <property type="evidence" value="ECO:0000318"/>
    <property type="project" value="GO_Central"/>
</dbReference>
<dbReference type="GO" id="GO:0031491">
    <property type="term" value="F:nucleosome binding"/>
    <property type="evidence" value="ECO:0000318"/>
    <property type="project" value="GO_Central"/>
</dbReference>
<dbReference type="GO" id="GO:0001073">
    <property type="term" value="F:transcription antitermination factor activity, DNA binding"/>
    <property type="evidence" value="ECO:0007669"/>
    <property type="project" value="EnsemblFungi"/>
</dbReference>
<dbReference type="GO" id="GO:0033554">
    <property type="term" value="P:cellular response to stress"/>
    <property type="evidence" value="ECO:0007669"/>
    <property type="project" value="EnsemblFungi"/>
</dbReference>
<dbReference type="GO" id="GO:0000082">
    <property type="term" value="P:G1/S transition of mitotic cell cycle"/>
    <property type="evidence" value="ECO:0007669"/>
    <property type="project" value="EnsemblFungi"/>
</dbReference>
<dbReference type="GO" id="GO:0000122">
    <property type="term" value="P:negative regulation of transcription by RNA polymerase II"/>
    <property type="evidence" value="ECO:0007669"/>
    <property type="project" value="EnsemblFungi"/>
</dbReference>
<dbReference type="GO" id="GO:0006334">
    <property type="term" value="P:nucleosome assembly"/>
    <property type="evidence" value="ECO:0007669"/>
    <property type="project" value="EnsemblFungi"/>
</dbReference>
<dbReference type="GO" id="GO:0034728">
    <property type="term" value="P:nucleosome organization"/>
    <property type="evidence" value="ECO:0000318"/>
    <property type="project" value="GO_Central"/>
</dbReference>
<dbReference type="GO" id="GO:0016973">
    <property type="term" value="P:poly(A)+ mRNA export from nucleus"/>
    <property type="evidence" value="ECO:0007669"/>
    <property type="project" value="EnsemblFungi"/>
</dbReference>
<dbReference type="GO" id="GO:0032968">
    <property type="term" value="P:positive regulation of transcription elongation by RNA polymerase II"/>
    <property type="evidence" value="ECO:0007669"/>
    <property type="project" value="EnsemblFungi"/>
</dbReference>
<dbReference type="GO" id="GO:0031440">
    <property type="term" value="P:regulation of mRNA 3'-end processing"/>
    <property type="evidence" value="ECO:0007669"/>
    <property type="project" value="EnsemblFungi"/>
</dbReference>
<dbReference type="GO" id="GO:0006368">
    <property type="term" value="P:transcription elongation by RNA polymerase II"/>
    <property type="evidence" value="ECO:0000318"/>
    <property type="project" value="GO_Central"/>
</dbReference>
<dbReference type="GO" id="GO:0140673">
    <property type="term" value="P:transcription elongation-coupled chromatin remodeling"/>
    <property type="evidence" value="ECO:0007669"/>
    <property type="project" value="EnsemblFungi"/>
</dbReference>
<dbReference type="CDD" id="cd02065">
    <property type="entry name" value="B12-binding_like"/>
    <property type="match status" value="1"/>
</dbReference>
<dbReference type="CDD" id="cd09928">
    <property type="entry name" value="SH2_Cterm_SPT6_like"/>
    <property type="match status" value="1"/>
</dbReference>
<dbReference type="CDD" id="cd09918">
    <property type="entry name" value="SH2_Nterm_SPT6_like"/>
    <property type="match status" value="1"/>
</dbReference>
<dbReference type="FunFam" id="3.30.420.140:FF:000007">
    <property type="entry name" value="Transcription elongation factor SPT6"/>
    <property type="match status" value="1"/>
</dbReference>
<dbReference type="FunFam" id="3.30.505.10:FF:000065">
    <property type="entry name" value="Transcription elongation factor SPT6"/>
    <property type="match status" value="1"/>
</dbReference>
<dbReference type="FunFam" id="1.10.10.2740:FF:000002">
    <property type="entry name" value="Transcription elongation factor Spt6"/>
    <property type="match status" value="1"/>
</dbReference>
<dbReference type="FunFam" id="1.10.10.650:FF:000004">
    <property type="entry name" value="Transcription elongation factor Spt6"/>
    <property type="match status" value="1"/>
</dbReference>
<dbReference type="FunFam" id="1.10.3500.10:FF:000005">
    <property type="entry name" value="Transcription elongation factor Spt6"/>
    <property type="match status" value="1"/>
</dbReference>
<dbReference type="FunFam" id="3.30.505.10:FF:000056">
    <property type="entry name" value="Transcription elongation factor Spt6"/>
    <property type="match status" value="1"/>
</dbReference>
<dbReference type="FunFam" id="1.10.150.850:FF:000001">
    <property type="entry name" value="Transcription elongation factor spt6"/>
    <property type="match status" value="1"/>
</dbReference>
<dbReference type="Gene3D" id="1.10.10.650">
    <property type="entry name" value="RuvA domain 2-like"/>
    <property type="match status" value="1"/>
</dbReference>
<dbReference type="Gene3D" id="3.30.505.10">
    <property type="entry name" value="SH2 domain"/>
    <property type="match status" value="2"/>
</dbReference>
<dbReference type="Gene3D" id="1.10.10.2740">
    <property type="entry name" value="Spt6, Death-like domain"/>
    <property type="match status" value="1"/>
</dbReference>
<dbReference type="Gene3D" id="1.10.150.850">
    <property type="entry name" value="Spt6, helix-hairpin-helix domain"/>
    <property type="match status" value="1"/>
</dbReference>
<dbReference type="Gene3D" id="1.10.3500.10">
    <property type="entry name" value="Tex N-terminal region-like"/>
    <property type="match status" value="1"/>
</dbReference>
<dbReference type="Gene3D" id="3.30.420.140">
    <property type="entry name" value="YqgF/RNase H-like domain"/>
    <property type="match status" value="1"/>
</dbReference>
<dbReference type="InterPro" id="IPR041692">
    <property type="entry name" value="HHH_9"/>
</dbReference>
<dbReference type="InterPro" id="IPR012340">
    <property type="entry name" value="NA-bd_OB-fold"/>
</dbReference>
<dbReference type="InterPro" id="IPR012337">
    <property type="entry name" value="RNaseH-like_sf"/>
</dbReference>
<dbReference type="InterPro" id="IPR010994">
    <property type="entry name" value="RuvA_2-like"/>
</dbReference>
<dbReference type="InterPro" id="IPR000980">
    <property type="entry name" value="SH2"/>
</dbReference>
<dbReference type="InterPro" id="IPR036860">
    <property type="entry name" value="SH2_dom_sf"/>
</dbReference>
<dbReference type="InterPro" id="IPR049540">
    <property type="entry name" value="Spt6-like_S1"/>
</dbReference>
<dbReference type="InterPro" id="IPR028083">
    <property type="entry name" value="Spt6_acidic_N_dom"/>
</dbReference>
<dbReference type="InterPro" id="IPR042066">
    <property type="entry name" value="Spt6_death-like"/>
</dbReference>
<dbReference type="InterPro" id="IPR032706">
    <property type="entry name" value="Spt6_HHH"/>
</dbReference>
<dbReference type="InterPro" id="IPR028088">
    <property type="entry name" value="Spt6_HTH_DNA-bd_dom"/>
</dbReference>
<dbReference type="InterPro" id="IPR035420">
    <property type="entry name" value="Spt6_SH2"/>
</dbReference>
<dbReference type="InterPro" id="IPR035018">
    <property type="entry name" value="Spt6_SH2_C"/>
</dbReference>
<dbReference type="InterPro" id="IPR035019">
    <property type="entry name" value="Spt6_SH2_N"/>
</dbReference>
<dbReference type="InterPro" id="IPR028231">
    <property type="entry name" value="Spt6_YqgF"/>
</dbReference>
<dbReference type="InterPro" id="IPR055179">
    <property type="entry name" value="Tex-like_central_region"/>
</dbReference>
<dbReference type="InterPro" id="IPR023323">
    <property type="entry name" value="Tex-like_dom_sf"/>
</dbReference>
<dbReference type="InterPro" id="IPR023319">
    <property type="entry name" value="Tex-like_HTH_dom_sf"/>
</dbReference>
<dbReference type="InterPro" id="IPR017072">
    <property type="entry name" value="TF_Spt6"/>
</dbReference>
<dbReference type="InterPro" id="IPR037027">
    <property type="entry name" value="YqgF/RNaseH-like_dom_sf"/>
</dbReference>
<dbReference type="PANTHER" id="PTHR10145">
    <property type="entry name" value="TRANSCRIPTION ELONGATION FACTOR SPT6"/>
    <property type="match status" value="1"/>
</dbReference>
<dbReference type="PANTHER" id="PTHR10145:SF6">
    <property type="entry name" value="TRANSCRIPTION ELONGATION FACTOR SPT6"/>
    <property type="match status" value="1"/>
</dbReference>
<dbReference type="Pfam" id="PF14635">
    <property type="entry name" value="HHH_7"/>
    <property type="match status" value="1"/>
</dbReference>
<dbReference type="Pfam" id="PF17674">
    <property type="entry name" value="HHH_9"/>
    <property type="match status" value="1"/>
</dbReference>
<dbReference type="Pfam" id="PF14641">
    <property type="entry name" value="HTH_44"/>
    <property type="match status" value="1"/>
</dbReference>
<dbReference type="Pfam" id="PF14633">
    <property type="entry name" value="SH2_2"/>
    <property type="match status" value="1"/>
</dbReference>
<dbReference type="Pfam" id="PF14632">
    <property type="entry name" value="SPT6_acidic"/>
    <property type="match status" value="1"/>
</dbReference>
<dbReference type="Pfam" id="PF21710">
    <property type="entry name" value="Spt6_S1"/>
    <property type="match status" value="1"/>
</dbReference>
<dbReference type="Pfam" id="PF22706">
    <property type="entry name" value="Tex_central_region"/>
    <property type="match status" value="1"/>
</dbReference>
<dbReference type="Pfam" id="PF14639">
    <property type="entry name" value="YqgF"/>
    <property type="match status" value="1"/>
</dbReference>
<dbReference type="PIRSF" id="PIRSF036947">
    <property type="entry name" value="Spt6"/>
    <property type="match status" value="1"/>
</dbReference>
<dbReference type="SUPFAM" id="SSF50249">
    <property type="entry name" value="Nucleic acid-binding proteins"/>
    <property type="match status" value="1"/>
</dbReference>
<dbReference type="SUPFAM" id="SSF53098">
    <property type="entry name" value="Ribonuclease H-like"/>
    <property type="match status" value="1"/>
</dbReference>
<dbReference type="SUPFAM" id="SSF47781">
    <property type="entry name" value="RuvA domain 2-like"/>
    <property type="match status" value="2"/>
</dbReference>
<dbReference type="SUPFAM" id="SSF55550">
    <property type="entry name" value="SH2 domain"/>
    <property type="match status" value="1"/>
</dbReference>
<dbReference type="SUPFAM" id="SSF158832">
    <property type="entry name" value="Tex N-terminal region-like"/>
    <property type="match status" value="1"/>
</dbReference>
<dbReference type="PROSITE" id="PS50001">
    <property type="entry name" value="SH2"/>
    <property type="match status" value="1"/>
</dbReference>
<keyword id="KW-0158">Chromosome</keyword>
<keyword id="KW-0539">Nucleus</keyword>
<keyword id="KW-1185">Reference proteome</keyword>
<keyword id="KW-0727">SH2 domain</keyword>
<keyword id="KW-0804">Transcription</keyword>
<comment type="function">
    <text evidence="1">Histone H3-H4 chaperone that plays a role in maintenance of chromatin structure during RNA polymerase II transcription elongation thereby repressing transcription initiation from cryptic promoters. Mediates the reassembly of nucleosomes onto the promoters of at least a selected set of genes during repression; the nucleosome reassembly is essential for transcriptional repression. Essential for viability.</text>
</comment>
<comment type="subcellular location">
    <subcellularLocation>
        <location evidence="1">Nucleus</location>
    </subcellularLocation>
    <subcellularLocation>
        <location evidence="1">Chromosome</location>
    </subcellularLocation>
</comment>
<comment type="similarity">
    <text evidence="4">Belongs to the SPT6 family.</text>
</comment>
<reference key="1">
    <citation type="journal article" date="2005" name="Nature">
        <title>Genomic sequence of the pathogenic and allergenic filamentous fungus Aspergillus fumigatus.</title>
        <authorList>
            <person name="Nierman W.C."/>
            <person name="Pain A."/>
            <person name="Anderson M.J."/>
            <person name="Wortman J.R."/>
            <person name="Kim H.S."/>
            <person name="Arroyo J."/>
            <person name="Berriman M."/>
            <person name="Abe K."/>
            <person name="Archer D.B."/>
            <person name="Bermejo C."/>
            <person name="Bennett J.W."/>
            <person name="Bowyer P."/>
            <person name="Chen D."/>
            <person name="Collins M."/>
            <person name="Coulsen R."/>
            <person name="Davies R."/>
            <person name="Dyer P.S."/>
            <person name="Farman M.L."/>
            <person name="Fedorova N."/>
            <person name="Fedorova N.D."/>
            <person name="Feldblyum T.V."/>
            <person name="Fischer R."/>
            <person name="Fosker N."/>
            <person name="Fraser A."/>
            <person name="Garcia J.L."/>
            <person name="Garcia M.J."/>
            <person name="Goble A."/>
            <person name="Goldman G.H."/>
            <person name="Gomi K."/>
            <person name="Griffith-Jones S."/>
            <person name="Gwilliam R."/>
            <person name="Haas B.J."/>
            <person name="Haas H."/>
            <person name="Harris D.E."/>
            <person name="Horiuchi H."/>
            <person name="Huang J."/>
            <person name="Humphray S."/>
            <person name="Jimenez J."/>
            <person name="Keller N."/>
            <person name="Khouri H."/>
            <person name="Kitamoto K."/>
            <person name="Kobayashi T."/>
            <person name="Konzack S."/>
            <person name="Kulkarni R."/>
            <person name="Kumagai T."/>
            <person name="Lafton A."/>
            <person name="Latge J.-P."/>
            <person name="Li W."/>
            <person name="Lord A."/>
            <person name="Lu C."/>
            <person name="Majoros W.H."/>
            <person name="May G.S."/>
            <person name="Miller B.L."/>
            <person name="Mohamoud Y."/>
            <person name="Molina M."/>
            <person name="Monod M."/>
            <person name="Mouyna I."/>
            <person name="Mulligan S."/>
            <person name="Murphy L.D."/>
            <person name="O'Neil S."/>
            <person name="Paulsen I."/>
            <person name="Penalva M.A."/>
            <person name="Pertea M."/>
            <person name="Price C."/>
            <person name="Pritchard B.L."/>
            <person name="Quail M.A."/>
            <person name="Rabbinowitsch E."/>
            <person name="Rawlins N."/>
            <person name="Rajandream M.A."/>
            <person name="Reichard U."/>
            <person name="Renauld H."/>
            <person name="Robson G.D."/>
            <person name="Rodriguez de Cordoba S."/>
            <person name="Rodriguez-Pena J.M."/>
            <person name="Ronning C.M."/>
            <person name="Rutter S."/>
            <person name="Salzberg S.L."/>
            <person name="Sanchez M."/>
            <person name="Sanchez-Ferrero J.C."/>
            <person name="Saunders D."/>
            <person name="Seeger K."/>
            <person name="Squares R."/>
            <person name="Squares S."/>
            <person name="Takeuchi M."/>
            <person name="Tekaia F."/>
            <person name="Turner G."/>
            <person name="Vazquez de Aldana C.R."/>
            <person name="Weidman J."/>
            <person name="White O."/>
            <person name="Woodward J.R."/>
            <person name="Yu J.-H."/>
            <person name="Fraser C.M."/>
            <person name="Galagan J.E."/>
            <person name="Asai K."/>
            <person name="Machida M."/>
            <person name="Hall N."/>
            <person name="Barrell B.G."/>
            <person name="Denning D.W."/>
        </authorList>
    </citation>
    <scope>NUCLEOTIDE SEQUENCE [LARGE SCALE GENOMIC DNA]</scope>
    <source>
        <strain>ATCC MYA-4609 / CBS 101355 / FGSC A1100 / Af293</strain>
    </source>
</reference>